<dbReference type="EMBL" id="AE013598">
    <property type="protein sequence ID" value="AAW76475.1"/>
    <property type="status" value="ALT_INIT"/>
    <property type="molecule type" value="Genomic_DNA"/>
</dbReference>
<dbReference type="SMR" id="Q5GXU6"/>
<dbReference type="STRING" id="291331.XOO3221"/>
<dbReference type="KEGG" id="xoo:XOO3221"/>
<dbReference type="HOGENOM" id="CLU_070525_1_1_6"/>
<dbReference type="Proteomes" id="UP000006735">
    <property type="component" value="Chromosome"/>
</dbReference>
<dbReference type="GO" id="GO:0005829">
    <property type="term" value="C:cytosol"/>
    <property type="evidence" value="ECO:0007669"/>
    <property type="project" value="TreeGrafter"/>
</dbReference>
<dbReference type="GO" id="GO:0000028">
    <property type="term" value="P:ribosomal small subunit assembly"/>
    <property type="evidence" value="ECO:0007669"/>
    <property type="project" value="TreeGrafter"/>
</dbReference>
<dbReference type="GO" id="GO:0006412">
    <property type="term" value="P:translation"/>
    <property type="evidence" value="ECO:0007669"/>
    <property type="project" value="TreeGrafter"/>
</dbReference>
<dbReference type="CDD" id="cd01734">
    <property type="entry name" value="YlxS_C"/>
    <property type="match status" value="1"/>
</dbReference>
<dbReference type="FunFam" id="3.30.300.70:FF:000001">
    <property type="entry name" value="Ribosome maturation factor RimP"/>
    <property type="match status" value="1"/>
</dbReference>
<dbReference type="Gene3D" id="2.30.30.180">
    <property type="entry name" value="Ribosome maturation factor RimP, C-terminal domain"/>
    <property type="match status" value="1"/>
</dbReference>
<dbReference type="Gene3D" id="3.30.300.70">
    <property type="entry name" value="RimP-like superfamily, N-terminal"/>
    <property type="match status" value="1"/>
</dbReference>
<dbReference type="HAMAP" id="MF_01077">
    <property type="entry name" value="RimP"/>
    <property type="match status" value="1"/>
</dbReference>
<dbReference type="InterPro" id="IPR003728">
    <property type="entry name" value="Ribosome_maturation_RimP"/>
</dbReference>
<dbReference type="InterPro" id="IPR028998">
    <property type="entry name" value="RimP_C"/>
</dbReference>
<dbReference type="InterPro" id="IPR036847">
    <property type="entry name" value="RimP_C_sf"/>
</dbReference>
<dbReference type="InterPro" id="IPR028989">
    <property type="entry name" value="RimP_N"/>
</dbReference>
<dbReference type="InterPro" id="IPR035956">
    <property type="entry name" value="RimP_N_sf"/>
</dbReference>
<dbReference type="NCBIfam" id="NF000927">
    <property type="entry name" value="PRK00092.1-1"/>
    <property type="match status" value="1"/>
</dbReference>
<dbReference type="NCBIfam" id="NF000931">
    <property type="entry name" value="PRK00092.2-3"/>
    <property type="match status" value="1"/>
</dbReference>
<dbReference type="PANTHER" id="PTHR33867">
    <property type="entry name" value="RIBOSOME MATURATION FACTOR RIMP"/>
    <property type="match status" value="1"/>
</dbReference>
<dbReference type="PANTHER" id="PTHR33867:SF1">
    <property type="entry name" value="RIBOSOME MATURATION FACTOR RIMP"/>
    <property type="match status" value="1"/>
</dbReference>
<dbReference type="Pfam" id="PF17384">
    <property type="entry name" value="DUF150_C"/>
    <property type="match status" value="1"/>
</dbReference>
<dbReference type="Pfam" id="PF02576">
    <property type="entry name" value="RimP_N"/>
    <property type="match status" value="1"/>
</dbReference>
<dbReference type="SUPFAM" id="SSF74942">
    <property type="entry name" value="YhbC-like, C-terminal domain"/>
    <property type="match status" value="1"/>
</dbReference>
<dbReference type="SUPFAM" id="SSF75420">
    <property type="entry name" value="YhbC-like, N-terminal domain"/>
    <property type="match status" value="1"/>
</dbReference>
<keyword id="KW-0963">Cytoplasm</keyword>
<keyword id="KW-1185">Reference proteome</keyword>
<keyword id="KW-0690">Ribosome biogenesis</keyword>
<comment type="function">
    <text evidence="1">Required for maturation of 30S ribosomal subunits.</text>
</comment>
<comment type="subcellular location">
    <subcellularLocation>
        <location evidence="1">Cytoplasm</location>
    </subcellularLocation>
</comment>
<comment type="similarity">
    <text evidence="1">Belongs to the RimP family.</text>
</comment>
<comment type="sequence caution" evidence="3">
    <conflict type="erroneous initiation">
        <sequence resource="EMBL-CDS" id="AAW76475"/>
    </conflict>
</comment>
<gene>
    <name evidence="1" type="primary">rimP</name>
    <name type="ordered locus">XOO3221</name>
</gene>
<accession>Q5GXU6</accession>
<sequence>MSEKATEIANLLSPTVDSLGVELLGVEYLPAPGGATLRLYIDVPLAEQPERVINVDDCERVSREVSAQLDVEDPISGHYTLEVSSPGVDRPLFTLEQFARHAGESTKIVLKLAQDGRRRFQGEILRIDAEAGAVVFAIDGKDVQIGFDNIDKARILPDWVALGLAPQKPNKPGPKKTGHEKKKPSNESAAGKPRAE</sequence>
<name>RIMP_XANOR</name>
<feature type="chain" id="PRO_0000229294" description="Ribosome maturation factor RimP">
    <location>
        <begin position="1"/>
        <end position="196"/>
    </location>
</feature>
<feature type="region of interest" description="Disordered" evidence="2">
    <location>
        <begin position="164"/>
        <end position="196"/>
    </location>
</feature>
<feature type="compositionally biased region" description="Basic residues" evidence="2">
    <location>
        <begin position="173"/>
        <end position="182"/>
    </location>
</feature>
<reference key="1">
    <citation type="journal article" date="2005" name="Nucleic Acids Res.">
        <title>The genome sequence of Xanthomonas oryzae pathovar oryzae KACC10331, the bacterial blight pathogen of rice.</title>
        <authorList>
            <person name="Lee B.-M."/>
            <person name="Park Y.-J."/>
            <person name="Park D.-S."/>
            <person name="Kang H.-W."/>
            <person name="Kim J.-G."/>
            <person name="Song E.-S."/>
            <person name="Park I.-C."/>
            <person name="Yoon U.-H."/>
            <person name="Hahn J.-H."/>
            <person name="Koo B.-S."/>
            <person name="Lee G.-B."/>
            <person name="Kim H."/>
            <person name="Park H.-S."/>
            <person name="Yoon K.-O."/>
            <person name="Kim J.-H."/>
            <person name="Jung C.-H."/>
            <person name="Koh N.-H."/>
            <person name="Seo J.-S."/>
            <person name="Go S.-J."/>
        </authorList>
    </citation>
    <scope>NUCLEOTIDE SEQUENCE [LARGE SCALE GENOMIC DNA]</scope>
    <source>
        <strain>KACC10331 / KXO85</strain>
    </source>
</reference>
<evidence type="ECO:0000255" key="1">
    <source>
        <dbReference type="HAMAP-Rule" id="MF_01077"/>
    </source>
</evidence>
<evidence type="ECO:0000256" key="2">
    <source>
        <dbReference type="SAM" id="MobiDB-lite"/>
    </source>
</evidence>
<evidence type="ECO:0000305" key="3"/>
<proteinExistence type="inferred from homology"/>
<organism>
    <name type="scientific">Xanthomonas oryzae pv. oryzae (strain KACC10331 / KXO85)</name>
    <dbReference type="NCBI Taxonomy" id="291331"/>
    <lineage>
        <taxon>Bacteria</taxon>
        <taxon>Pseudomonadati</taxon>
        <taxon>Pseudomonadota</taxon>
        <taxon>Gammaproteobacteria</taxon>
        <taxon>Lysobacterales</taxon>
        <taxon>Lysobacteraceae</taxon>
        <taxon>Xanthomonas</taxon>
    </lineage>
</organism>
<protein>
    <recommendedName>
        <fullName evidence="1">Ribosome maturation factor RimP</fullName>
    </recommendedName>
</protein>